<feature type="chain" id="PRO_0000259431" description="Translation initiation factor 6">
    <location>
        <begin position="1"/>
        <end position="221"/>
    </location>
</feature>
<name>IF6_METHJ</name>
<protein>
    <recommendedName>
        <fullName evidence="1">Translation initiation factor 6</fullName>
        <shortName evidence="1">aIF-6</shortName>
    </recommendedName>
</protein>
<organism>
    <name type="scientific">Methanospirillum hungatei JF-1 (strain ATCC 27890 / DSM 864 / NBRC 100397 / JF-1)</name>
    <dbReference type="NCBI Taxonomy" id="323259"/>
    <lineage>
        <taxon>Archaea</taxon>
        <taxon>Methanobacteriati</taxon>
        <taxon>Methanobacteriota</taxon>
        <taxon>Stenosarchaea group</taxon>
        <taxon>Methanomicrobia</taxon>
        <taxon>Methanomicrobiales</taxon>
        <taxon>Methanospirillaceae</taxon>
        <taxon>Methanospirillum</taxon>
    </lineage>
</organism>
<gene>
    <name evidence="1" type="primary">eif6</name>
    <name type="ordered locus">Mhun_3020</name>
</gene>
<comment type="function">
    <text evidence="1">Binds to the 50S ribosomal subunit and prevents its association with the 30S ribosomal subunit to form the 70S initiation complex.</text>
</comment>
<comment type="similarity">
    <text evidence="1">Belongs to the eIF-6 family.</text>
</comment>
<evidence type="ECO:0000255" key="1">
    <source>
        <dbReference type="HAMAP-Rule" id="MF_00032"/>
    </source>
</evidence>
<sequence>MDRFVSIAGDPHIGVFTRVFDDIAVVPPDVPEEVTTRYEEALKVEIVRTTIQRSPIIGSLLVGNNNGLVITGMATEEEIATLSEYRDLMLLEEGMNAAGNIILANDHFAAVHPEMDEEFMDALSDFLKVPVIPLTLGDVKTVGMAAVATNSGVVVSPRTTPGEIQRLEQVCSLPVGKGTVTMGNAMVGTGLVANRYGYLAGVGTSGYELGRIEDILGFEEE</sequence>
<proteinExistence type="inferred from homology"/>
<dbReference type="EMBL" id="CP000254">
    <property type="protein sequence ID" value="ABD42707.1"/>
    <property type="molecule type" value="Genomic_DNA"/>
</dbReference>
<dbReference type="RefSeq" id="WP_011449958.1">
    <property type="nucleotide sequence ID" value="NC_007796.1"/>
</dbReference>
<dbReference type="SMR" id="Q2FS97"/>
<dbReference type="FunCoup" id="Q2FS97">
    <property type="interactions" value="152"/>
</dbReference>
<dbReference type="STRING" id="323259.Mhun_3020"/>
<dbReference type="EnsemblBacteria" id="ABD42707">
    <property type="protein sequence ID" value="ABD42707"/>
    <property type="gene ID" value="Mhun_3020"/>
</dbReference>
<dbReference type="GeneID" id="3922842"/>
<dbReference type="KEGG" id="mhu:Mhun_3020"/>
<dbReference type="eggNOG" id="arCOG04176">
    <property type="taxonomic scope" value="Archaea"/>
</dbReference>
<dbReference type="HOGENOM" id="CLU_071894_1_0_2"/>
<dbReference type="InParanoid" id="Q2FS97"/>
<dbReference type="OrthoDB" id="33582at2157"/>
<dbReference type="Proteomes" id="UP000001941">
    <property type="component" value="Chromosome"/>
</dbReference>
<dbReference type="GO" id="GO:0043022">
    <property type="term" value="F:ribosome binding"/>
    <property type="evidence" value="ECO:0007669"/>
    <property type="project" value="InterPro"/>
</dbReference>
<dbReference type="GO" id="GO:0003743">
    <property type="term" value="F:translation initiation factor activity"/>
    <property type="evidence" value="ECO:0007669"/>
    <property type="project" value="UniProtKB-UniRule"/>
</dbReference>
<dbReference type="GO" id="GO:0042256">
    <property type="term" value="P:cytosolic ribosome assembly"/>
    <property type="evidence" value="ECO:0007669"/>
    <property type="project" value="InterPro"/>
</dbReference>
<dbReference type="Gene3D" id="3.75.10.10">
    <property type="entry name" value="L-arginine/glycine Amidinotransferase, Chain A"/>
    <property type="match status" value="1"/>
</dbReference>
<dbReference type="HAMAP" id="MF_00032">
    <property type="entry name" value="eIF_6"/>
    <property type="match status" value="1"/>
</dbReference>
<dbReference type="InterPro" id="IPR002769">
    <property type="entry name" value="eIF6"/>
</dbReference>
<dbReference type="NCBIfam" id="TIGR00323">
    <property type="entry name" value="eIF-6"/>
    <property type="match status" value="1"/>
</dbReference>
<dbReference type="NCBIfam" id="NF003132">
    <property type="entry name" value="PRK04046.2-4"/>
    <property type="match status" value="1"/>
</dbReference>
<dbReference type="PANTHER" id="PTHR10784">
    <property type="entry name" value="TRANSLATION INITIATION FACTOR 6"/>
    <property type="match status" value="1"/>
</dbReference>
<dbReference type="Pfam" id="PF01912">
    <property type="entry name" value="eIF-6"/>
    <property type="match status" value="1"/>
</dbReference>
<dbReference type="PIRSF" id="PIRSF006413">
    <property type="entry name" value="IF-6"/>
    <property type="match status" value="1"/>
</dbReference>
<dbReference type="SMART" id="SM00654">
    <property type="entry name" value="eIF6"/>
    <property type="match status" value="1"/>
</dbReference>
<dbReference type="SUPFAM" id="SSF55909">
    <property type="entry name" value="Pentein"/>
    <property type="match status" value="1"/>
</dbReference>
<reference key="1">
    <citation type="journal article" date="2016" name="Stand. Genomic Sci.">
        <title>Complete genome sequence of Methanospirillum hungatei type strain JF1.</title>
        <authorList>
            <person name="Gunsalus R.P."/>
            <person name="Cook L.E."/>
            <person name="Crable B."/>
            <person name="Rohlin L."/>
            <person name="McDonald E."/>
            <person name="Mouttaki H."/>
            <person name="Sieber J.R."/>
            <person name="Poweleit N."/>
            <person name="Zhou H."/>
            <person name="Lapidus A.L."/>
            <person name="Daligault H.E."/>
            <person name="Land M."/>
            <person name="Gilna P."/>
            <person name="Ivanova N."/>
            <person name="Kyrpides N."/>
            <person name="Culley D.E."/>
            <person name="McInerney M.J."/>
        </authorList>
    </citation>
    <scope>NUCLEOTIDE SEQUENCE [LARGE SCALE GENOMIC DNA]</scope>
    <source>
        <strain>ATCC 27890 / DSM 864 / NBRC 100397 / JF-1</strain>
    </source>
</reference>
<keyword id="KW-0396">Initiation factor</keyword>
<keyword id="KW-0648">Protein biosynthesis</keyword>
<keyword id="KW-1185">Reference proteome</keyword>
<accession>Q2FS97</accession>